<reference key="1">
    <citation type="journal article" date="2002" name="Science">
        <title>50 million years of genomic stasis in endosymbiotic bacteria.</title>
        <authorList>
            <person name="Tamas I."/>
            <person name="Klasson L."/>
            <person name="Canbaeck B."/>
            <person name="Naeslund A.K."/>
            <person name="Eriksson A.-S."/>
            <person name="Wernegreen J.J."/>
            <person name="Sandstroem J.P."/>
            <person name="Moran N.A."/>
            <person name="Andersson S.G.E."/>
        </authorList>
    </citation>
    <scope>NUCLEOTIDE SEQUENCE [LARGE SCALE GENOMIC DNA]</scope>
    <source>
        <strain>Sg</strain>
    </source>
</reference>
<name>RL33_BUCAP</name>
<sequence length="55" mass="6493">MAKKNREKIKMISSAGTGHYYTTTKNKRNTPDKLKLKKYDPIIRKHILYNEGKIK</sequence>
<accession>Q8KA34</accession>
<protein>
    <recommendedName>
        <fullName evidence="1">Large ribosomal subunit protein bL33</fullName>
    </recommendedName>
    <alternativeName>
        <fullName evidence="2">50S ribosomal protein L33</fullName>
    </alternativeName>
</protein>
<organism>
    <name type="scientific">Buchnera aphidicola subsp. Schizaphis graminum (strain Sg)</name>
    <dbReference type="NCBI Taxonomy" id="198804"/>
    <lineage>
        <taxon>Bacteria</taxon>
        <taxon>Pseudomonadati</taxon>
        <taxon>Pseudomonadota</taxon>
        <taxon>Gammaproteobacteria</taxon>
        <taxon>Enterobacterales</taxon>
        <taxon>Erwiniaceae</taxon>
        <taxon>Buchnera</taxon>
    </lineage>
</organism>
<dbReference type="EMBL" id="AE013218">
    <property type="protein sequence ID" value="AAM67648.1"/>
    <property type="molecule type" value="Genomic_DNA"/>
</dbReference>
<dbReference type="RefSeq" id="WP_011053614.1">
    <property type="nucleotide sequence ID" value="NC_004061.1"/>
</dbReference>
<dbReference type="SMR" id="Q8KA34"/>
<dbReference type="STRING" id="198804.BUsg_078"/>
<dbReference type="GeneID" id="93003546"/>
<dbReference type="KEGG" id="bas:BUsg_078"/>
<dbReference type="eggNOG" id="COG0267">
    <property type="taxonomic scope" value="Bacteria"/>
</dbReference>
<dbReference type="HOGENOM" id="CLU_190949_1_1_6"/>
<dbReference type="Proteomes" id="UP000000416">
    <property type="component" value="Chromosome"/>
</dbReference>
<dbReference type="GO" id="GO:0022625">
    <property type="term" value="C:cytosolic large ribosomal subunit"/>
    <property type="evidence" value="ECO:0007669"/>
    <property type="project" value="TreeGrafter"/>
</dbReference>
<dbReference type="GO" id="GO:0003735">
    <property type="term" value="F:structural constituent of ribosome"/>
    <property type="evidence" value="ECO:0007669"/>
    <property type="project" value="InterPro"/>
</dbReference>
<dbReference type="GO" id="GO:0006412">
    <property type="term" value="P:translation"/>
    <property type="evidence" value="ECO:0007669"/>
    <property type="project" value="UniProtKB-UniRule"/>
</dbReference>
<dbReference type="FunFam" id="2.20.28.120:FF:000001">
    <property type="entry name" value="50S ribosomal protein L33"/>
    <property type="match status" value="1"/>
</dbReference>
<dbReference type="Gene3D" id="2.20.28.120">
    <property type="entry name" value="Ribosomal protein L33"/>
    <property type="match status" value="1"/>
</dbReference>
<dbReference type="HAMAP" id="MF_00294">
    <property type="entry name" value="Ribosomal_bL33"/>
    <property type="match status" value="1"/>
</dbReference>
<dbReference type="InterPro" id="IPR001705">
    <property type="entry name" value="Ribosomal_bL33"/>
</dbReference>
<dbReference type="InterPro" id="IPR038584">
    <property type="entry name" value="Ribosomal_bL33_sf"/>
</dbReference>
<dbReference type="InterPro" id="IPR011332">
    <property type="entry name" value="Ribosomal_zn-bd"/>
</dbReference>
<dbReference type="NCBIfam" id="NF001860">
    <property type="entry name" value="PRK00595.1"/>
    <property type="match status" value="1"/>
</dbReference>
<dbReference type="NCBIfam" id="TIGR01023">
    <property type="entry name" value="rpmG_bact"/>
    <property type="match status" value="1"/>
</dbReference>
<dbReference type="PANTHER" id="PTHR15238">
    <property type="entry name" value="54S RIBOSOMAL PROTEIN L39, MITOCHONDRIAL"/>
    <property type="match status" value="1"/>
</dbReference>
<dbReference type="PANTHER" id="PTHR15238:SF1">
    <property type="entry name" value="LARGE RIBOSOMAL SUBUNIT PROTEIN BL33M"/>
    <property type="match status" value="1"/>
</dbReference>
<dbReference type="Pfam" id="PF00471">
    <property type="entry name" value="Ribosomal_L33"/>
    <property type="match status" value="1"/>
</dbReference>
<dbReference type="SUPFAM" id="SSF57829">
    <property type="entry name" value="Zn-binding ribosomal proteins"/>
    <property type="match status" value="1"/>
</dbReference>
<proteinExistence type="inferred from homology"/>
<keyword id="KW-0687">Ribonucleoprotein</keyword>
<keyword id="KW-0689">Ribosomal protein</keyword>
<gene>
    <name evidence="1" type="primary">rpmG</name>
    <name type="ordered locus">BUsg_078</name>
</gene>
<comment type="similarity">
    <text evidence="1">Belongs to the bacterial ribosomal protein bL33 family.</text>
</comment>
<feature type="chain" id="PRO_0000170145" description="Large ribosomal subunit protein bL33">
    <location>
        <begin position="1"/>
        <end position="55"/>
    </location>
</feature>
<evidence type="ECO:0000255" key="1">
    <source>
        <dbReference type="HAMAP-Rule" id="MF_00294"/>
    </source>
</evidence>
<evidence type="ECO:0000305" key="2"/>